<name>UXAC_YERPA</name>
<comment type="catalytic activity">
    <reaction evidence="1">
        <text>D-glucuronate = D-fructuronate</text>
        <dbReference type="Rhea" id="RHEA:13049"/>
        <dbReference type="ChEBI" id="CHEBI:58720"/>
        <dbReference type="ChEBI" id="CHEBI:59863"/>
        <dbReference type="EC" id="5.3.1.12"/>
    </reaction>
</comment>
<comment type="catalytic activity">
    <reaction evidence="1">
        <text>aldehydo-D-galacturonate = keto-D-tagaturonate</text>
        <dbReference type="Rhea" id="RHEA:27702"/>
        <dbReference type="ChEBI" id="CHEBI:12952"/>
        <dbReference type="ChEBI" id="CHEBI:17886"/>
        <dbReference type="EC" id="5.3.1.12"/>
    </reaction>
</comment>
<comment type="pathway">
    <text evidence="1">Carbohydrate metabolism; pentose and glucuronate interconversion.</text>
</comment>
<comment type="similarity">
    <text evidence="1">Belongs to the metallo-dependent hydrolases superfamily. Uronate isomerase family.</text>
</comment>
<gene>
    <name evidence="1" type="primary">uxaC</name>
    <name type="ordered locus">YPA_3210</name>
</gene>
<dbReference type="EC" id="5.3.1.12" evidence="1"/>
<dbReference type="EMBL" id="CP000308">
    <property type="protein sequence ID" value="ABG15172.1"/>
    <property type="molecule type" value="Genomic_DNA"/>
</dbReference>
<dbReference type="RefSeq" id="WP_002210410.1">
    <property type="nucleotide sequence ID" value="NZ_CP009906.1"/>
</dbReference>
<dbReference type="SMR" id="Q1C300"/>
<dbReference type="GeneID" id="57974037"/>
<dbReference type="KEGG" id="ypa:YPA_3210"/>
<dbReference type="UniPathway" id="UPA00246"/>
<dbReference type="Proteomes" id="UP000001971">
    <property type="component" value="Chromosome"/>
</dbReference>
<dbReference type="GO" id="GO:0008880">
    <property type="term" value="F:glucuronate isomerase activity"/>
    <property type="evidence" value="ECO:0007669"/>
    <property type="project" value="UniProtKB-UniRule"/>
</dbReference>
<dbReference type="GO" id="GO:0019698">
    <property type="term" value="P:D-galacturonate catabolic process"/>
    <property type="evidence" value="ECO:0007669"/>
    <property type="project" value="TreeGrafter"/>
</dbReference>
<dbReference type="GO" id="GO:0042840">
    <property type="term" value="P:D-glucuronate catabolic process"/>
    <property type="evidence" value="ECO:0007669"/>
    <property type="project" value="TreeGrafter"/>
</dbReference>
<dbReference type="Gene3D" id="3.20.20.140">
    <property type="entry name" value="Metal-dependent hydrolases"/>
    <property type="match status" value="1"/>
</dbReference>
<dbReference type="Gene3D" id="1.10.2020.10">
    <property type="entry name" value="uronate isomerase, domain 2, chain A"/>
    <property type="match status" value="1"/>
</dbReference>
<dbReference type="HAMAP" id="MF_00675">
    <property type="entry name" value="UxaC"/>
    <property type="match status" value="1"/>
</dbReference>
<dbReference type="InterPro" id="IPR032466">
    <property type="entry name" value="Metal_Hydrolase"/>
</dbReference>
<dbReference type="InterPro" id="IPR003766">
    <property type="entry name" value="Uronate_isomerase"/>
</dbReference>
<dbReference type="NCBIfam" id="NF002794">
    <property type="entry name" value="PRK02925.1"/>
    <property type="match status" value="1"/>
</dbReference>
<dbReference type="PANTHER" id="PTHR30068">
    <property type="entry name" value="URONATE ISOMERASE"/>
    <property type="match status" value="1"/>
</dbReference>
<dbReference type="PANTHER" id="PTHR30068:SF4">
    <property type="entry name" value="URONATE ISOMERASE"/>
    <property type="match status" value="1"/>
</dbReference>
<dbReference type="Pfam" id="PF02614">
    <property type="entry name" value="UxaC"/>
    <property type="match status" value="1"/>
</dbReference>
<dbReference type="SUPFAM" id="SSF51556">
    <property type="entry name" value="Metallo-dependent hydrolases"/>
    <property type="match status" value="1"/>
</dbReference>
<reference key="1">
    <citation type="journal article" date="2006" name="J. Bacteriol.">
        <title>Complete genome sequence of Yersinia pestis strains Antiqua and Nepal516: evidence of gene reduction in an emerging pathogen.</title>
        <authorList>
            <person name="Chain P.S.G."/>
            <person name="Hu P."/>
            <person name="Malfatti S.A."/>
            <person name="Radnedge L."/>
            <person name="Larimer F."/>
            <person name="Vergez L.M."/>
            <person name="Worsham P."/>
            <person name="Chu M.C."/>
            <person name="Andersen G.L."/>
        </authorList>
    </citation>
    <scope>NUCLEOTIDE SEQUENCE [LARGE SCALE GENOMIC DNA]</scope>
    <source>
        <strain>Antiqua</strain>
    </source>
</reference>
<keyword id="KW-0413">Isomerase</keyword>
<accession>Q1C300</accession>
<sequence length="469" mass="53475">MSQFLTEDFLLDTEFARRLYHDYAKDQPIFDYHCHLPPEQIAENYRFKNMYDIWLKGDHYKWRAMRTNGVAERLCTGDASDREKFDAWAATVPHTIGNPLYHWTHLELRRPFGITGKLLSPATSEEIWQRGNELLAQDPFSARGIMQQMNVKMVGTTDDPIDDLRHHKAIAADGSFNIKVLPSWRPDKAFNIEAAGFNDYMQRLEAAADTSISRFADLCVALNKRMDHFAAHGCKVSDHALDVVVYGEADETTLDAILARRLAGNQPSTEEIAQFKTAVLLFLSGEYHRREWVQQYHIGALRNNNSRMFNLVGPDIGFDSINDQPLAQPLSRLLDAQGLRNALPKTILYCLNPRDNEVIGTMVGNFQGEGEAGKMQFGSGWWFNDQKDGMQRQMTQLAQLGLLSRFVGMLTDSRSFLSYTRHEYFRRILCQMIGRWVADGEAPADIALLGAMVKNICFDNAQQYFAIEL</sequence>
<protein>
    <recommendedName>
        <fullName evidence="1">Uronate isomerase</fullName>
        <ecNumber evidence="1">5.3.1.12</ecNumber>
    </recommendedName>
    <alternativeName>
        <fullName evidence="1">Glucuronate isomerase</fullName>
    </alternativeName>
    <alternativeName>
        <fullName evidence="1">Uronic isomerase</fullName>
    </alternativeName>
</protein>
<evidence type="ECO:0000255" key="1">
    <source>
        <dbReference type="HAMAP-Rule" id="MF_00675"/>
    </source>
</evidence>
<feature type="chain" id="PRO_1000044784" description="Uronate isomerase">
    <location>
        <begin position="1"/>
        <end position="469"/>
    </location>
</feature>
<organism>
    <name type="scientific">Yersinia pestis bv. Antiqua (strain Antiqua)</name>
    <dbReference type="NCBI Taxonomy" id="360102"/>
    <lineage>
        <taxon>Bacteria</taxon>
        <taxon>Pseudomonadati</taxon>
        <taxon>Pseudomonadota</taxon>
        <taxon>Gammaproteobacteria</taxon>
        <taxon>Enterobacterales</taxon>
        <taxon>Yersiniaceae</taxon>
        <taxon>Yersinia</taxon>
    </lineage>
</organism>
<proteinExistence type="inferred from homology"/>